<organism>
    <name type="scientific">Bacillus cereus (strain ATCC 10987 / NRS 248)</name>
    <dbReference type="NCBI Taxonomy" id="222523"/>
    <lineage>
        <taxon>Bacteria</taxon>
        <taxon>Bacillati</taxon>
        <taxon>Bacillota</taxon>
        <taxon>Bacilli</taxon>
        <taxon>Bacillales</taxon>
        <taxon>Bacillaceae</taxon>
        <taxon>Bacillus</taxon>
        <taxon>Bacillus cereus group</taxon>
    </lineage>
</organism>
<comment type="function">
    <text evidence="1">One of the early assembly proteins it binds 23S rRNA. One of the proteins that surrounds the polypeptide exit tunnel on the outside of the ribosome. Forms the main docking site for trigger factor binding to the ribosome.</text>
</comment>
<comment type="subunit">
    <text evidence="1">Part of the 50S ribosomal subunit. Contacts protein L29, and trigger factor when it is bound to the ribosome.</text>
</comment>
<comment type="similarity">
    <text evidence="1">Belongs to the universal ribosomal protein uL23 family.</text>
</comment>
<gene>
    <name evidence="1" type="primary">rplW</name>
    <name type="ordered locus">BCE_0112</name>
</gene>
<dbReference type="EMBL" id="AE017194">
    <property type="protein sequence ID" value="AAS39048.1"/>
    <property type="molecule type" value="Genomic_DNA"/>
</dbReference>
<dbReference type="SMR" id="Q73F94"/>
<dbReference type="KEGG" id="bca:BCE_0112"/>
<dbReference type="HOGENOM" id="CLU_037562_3_2_9"/>
<dbReference type="Proteomes" id="UP000002527">
    <property type="component" value="Chromosome"/>
</dbReference>
<dbReference type="GO" id="GO:1990904">
    <property type="term" value="C:ribonucleoprotein complex"/>
    <property type="evidence" value="ECO:0007669"/>
    <property type="project" value="UniProtKB-KW"/>
</dbReference>
<dbReference type="GO" id="GO:0005840">
    <property type="term" value="C:ribosome"/>
    <property type="evidence" value="ECO:0007669"/>
    <property type="project" value="UniProtKB-KW"/>
</dbReference>
<dbReference type="GO" id="GO:0019843">
    <property type="term" value="F:rRNA binding"/>
    <property type="evidence" value="ECO:0007669"/>
    <property type="project" value="UniProtKB-UniRule"/>
</dbReference>
<dbReference type="GO" id="GO:0003735">
    <property type="term" value="F:structural constituent of ribosome"/>
    <property type="evidence" value="ECO:0007669"/>
    <property type="project" value="InterPro"/>
</dbReference>
<dbReference type="GO" id="GO:0006412">
    <property type="term" value="P:translation"/>
    <property type="evidence" value="ECO:0007669"/>
    <property type="project" value="UniProtKB-UniRule"/>
</dbReference>
<dbReference type="FunFam" id="3.30.70.330:FF:000001">
    <property type="entry name" value="50S ribosomal protein L23"/>
    <property type="match status" value="1"/>
</dbReference>
<dbReference type="Gene3D" id="3.30.70.330">
    <property type="match status" value="1"/>
</dbReference>
<dbReference type="HAMAP" id="MF_01369_B">
    <property type="entry name" value="Ribosomal_uL23_B"/>
    <property type="match status" value="1"/>
</dbReference>
<dbReference type="InterPro" id="IPR012677">
    <property type="entry name" value="Nucleotide-bd_a/b_plait_sf"/>
</dbReference>
<dbReference type="InterPro" id="IPR013025">
    <property type="entry name" value="Ribosomal_uL23-like"/>
</dbReference>
<dbReference type="InterPro" id="IPR012678">
    <property type="entry name" value="Ribosomal_uL23/eL15/eS24_sf"/>
</dbReference>
<dbReference type="InterPro" id="IPR001014">
    <property type="entry name" value="Ribosomal_uL23_CS"/>
</dbReference>
<dbReference type="NCBIfam" id="NF004363">
    <property type="entry name" value="PRK05738.2-4"/>
    <property type="match status" value="1"/>
</dbReference>
<dbReference type="PANTHER" id="PTHR11620">
    <property type="entry name" value="60S RIBOSOMAL PROTEIN L23A"/>
    <property type="match status" value="1"/>
</dbReference>
<dbReference type="Pfam" id="PF00276">
    <property type="entry name" value="Ribosomal_L23"/>
    <property type="match status" value="1"/>
</dbReference>
<dbReference type="SUPFAM" id="SSF54189">
    <property type="entry name" value="Ribosomal proteins S24e, L23 and L15e"/>
    <property type="match status" value="1"/>
</dbReference>
<dbReference type="PROSITE" id="PS00050">
    <property type="entry name" value="RIBOSOMAL_L23"/>
    <property type="match status" value="1"/>
</dbReference>
<keyword id="KW-0687">Ribonucleoprotein</keyword>
<keyword id="KW-0689">Ribosomal protein</keyword>
<keyword id="KW-0694">RNA-binding</keyword>
<keyword id="KW-0699">rRNA-binding</keyword>
<name>RL23_BACC1</name>
<reference key="1">
    <citation type="journal article" date="2004" name="Nucleic Acids Res.">
        <title>The genome sequence of Bacillus cereus ATCC 10987 reveals metabolic adaptations and a large plasmid related to Bacillus anthracis pXO1.</title>
        <authorList>
            <person name="Rasko D.A."/>
            <person name="Ravel J."/>
            <person name="Oekstad O.A."/>
            <person name="Helgason E."/>
            <person name="Cer R.Z."/>
            <person name="Jiang L."/>
            <person name="Shores K.A."/>
            <person name="Fouts D.E."/>
            <person name="Tourasse N.J."/>
            <person name="Angiuoli S.V."/>
            <person name="Kolonay J.F."/>
            <person name="Nelson W.C."/>
            <person name="Kolstoe A.-B."/>
            <person name="Fraser C.M."/>
            <person name="Read T.D."/>
        </authorList>
    </citation>
    <scope>NUCLEOTIDE SEQUENCE [LARGE SCALE GENOMIC DNA]</scope>
    <source>
        <strain>ATCC 10987 / NRS 248</strain>
    </source>
</reference>
<protein>
    <recommendedName>
        <fullName evidence="1">Large ribosomal subunit protein uL23</fullName>
    </recommendedName>
    <alternativeName>
        <fullName evidence="2">50S ribosomal protein L23</fullName>
    </alternativeName>
</protein>
<evidence type="ECO:0000255" key="1">
    <source>
        <dbReference type="HAMAP-Rule" id="MF_01369"/>
    </source>
</evidence>
<evidence type="ECO:0000305" key="2"/>
<sequence length="96" mass="11114">MRDPRDIIKRPVITERSMEMMAEKKYTFDVDVKSNKTEVKDALEAIFGVKVEKVNIMNYKPKAKRVGRHAGFTSRRRKAIVKLTADSKEIEIFQGV</sequence>
<accession>Q73F94</accession>
<proteinExistence type="inferred from homology"/>
<feature type="chain" id="PRO_0000272698" description="Large ribosomal subunit protein uL23">
    <location>
        <begin position="1"/>
        <end position="96"/>
    </location>
</feature>